<proteinExistence type="inferred from homology"/>
<name>RL21_HELPH</name>
<organism>
    <name type="scientific">Helicobacter pylori (strain HPAG1)</name>
    <dbReference type="NCBI Taxonomy" id="357544"/>
    <lineage>
        <taxon>Bacteria</taxon>
        <taxon>Pseudomonadati</taxon>
        <taxon>Campylobacterota</taxon>
        <taxon>Epsilonproteobacteria</taxon>
        <taxon>Campylobacterales</taxon>
        <taxon>Helicobacteraceae</taxon>
        <taxon>Helicobacter</taxon>
    </lineage>
</organism>
<evidence type="ECO:0000255" key="1">
    <source>
        <dbReference type="HAMAP-Rule" id="MF_01363"/>
    </source>
</evidence>
<evidence type="ECO:0000305" key="2"/>
<keyword id="KW-0687">Ribonucleoprotein</keyword>
<keyword id="KW-0689">Ribosomal protein</keyword>
<keyword id="KW-0694">RNA-binding</keyword>
<keyword id="KW-0699">rRNA-binding</keyword>
<gene>
    <name evidence="1" type="primary">rplU</name>
    <name type="ordered locus">HPAG1_0298</name>
</gene>
<comment type="function">
    <text evidence="1">This protein binds to 23S rRNA in the presence of protein L20.</text>
</comment>
<comment type="subunit">
    <text evidence="1">Part of the 50S ribosomal subunit. Contacts protein L20.</text>
</comment>
<comment type="similarity">
    <text evidence="1">Belongs to the bacterial ribosomal protein bL21 family.</text>
</comment>
<accession>Q1CUK7</accession>
<protein>
    <recommendedName>
        <fullName evidence="1">Large ribosomal subunit protein bL21</fullName>
    </recommendedName>
    <alternativeName>
        <fullName evidence="2">50S ribosomal protein L21</fullName>
    </alternativeName>
</protein>
<dbReference type="EMBL" id="CP000241">
    <property type="protein sequence ID" value="ABF84365.1"/>
    <property type="molecule type" value="Genomic_DNA"/>
</dbReference>
<dbReference type="RefSeq" id="WP_000119320.1">
    <property type="nucleotide sequence ID" value="NC_008086.1"/>
</dbReference>
<dbReference type="SMR" id="Q1CUK7"/>
<dbReference type="KEGG" id="hpa:HPAG1_0298"/>
<dbReference type="HOGENOM" id="CLU_061463_3_1_7"/>
<dbReference type="GO" id="GO:0005737">
    <property type="term" value="C:cytoplasm"/>
    <property type="evidence" value="ECO:0007669"/>
    <property type="project" value="UniProtKB-ARBA"/>
</dbReference>
<dbReference type="GO" id="GO:1990904">
    <property type="term" value="C:ribonucleoprotein complex"/>
    <property type="evidence" value="ECO:0007669"/>
    <property type="project" value="UniProtKB-KW"/>
</dbReference>
<dbReference type="GO" id="GO:0005840">
    <property type="term" value="C:ribosome"/>
    <property type="evidence" value="ECO:0007669"/>
    <property type="project" value="UniProtKB-KW"/>
</dbReference>
<dbReference type="GO" id="GO:0019843">
    <property type="term" value="F:rRNA binding"/>
    <property type="evidence" value="ECO:0007669"/>
    <property type="project" value="UniProtKB-UniRule"/>
</dbReference>
<dbReference type="GO" id="GO:0003735">
    <property type="term" value="F:structural constituent of ribosome"/>
    <property type="evidence" value="ECO:0007669"/>
    <property type="project" value="InterPro"/>
</dbReference>
<dbReference type="GO" id="GO:0006412">
    <property type="term" value="P:translation"/>
    <property type="evidence" value="ECO:0007669"/>
    <property type="project" value="UniProtKB-UniRule"/>
</dbReference>
<dbReference type="HAMAP" id="MF_01363">
    <property type="entry name" value="Ribosomal_bL21"/>
    <property type="match status" value="1"/>
</dbReference>
<dbReference type="InterPro" id="IPR028909">
    <property type="entry name" value="bL21-like"/>
</dbReference>
<dbReference type="InterPro" id="IPR036164">
    <property type="entry name" value="bL21-like_sf"/>
</dbReference>
<dbReference type="InterPro" id="IPR001787">
    <property type="entry name" value="Ribosomal_bL21"/>
</dbReference>
<dbReference type="InterPro" id="IPR018258">
    <property type="entry name" value="Ribosomal_bL21_CS"/>
</dbReference>
<dbReference type="NCBIfam" id="TIGR00061">
    <property type="entry name" value="L21"/>
    <property type="match status" value="1"/>
</dbReference>
<dbReference type="PANTHER" id="PTHR21349">
    <property type="entry name" value="50S RIBOSOMAL PROTEIN L21"/>
    <property type="match status" value="1"/>
</dbReference>
<dbReference type="PANTHER" id="PTHR21349:SF0">
    <property type="entry name" value="LARGE RIBOSOMAL SUBUNIT PROTEIN BL21M"/>
    <property type="match status" value="1"/>
</dbReference>
<dbReference type="Pfam" id="PF00829">
    <property type="entry name" value="Ribosomal_L21p"/>
    <property type="match status" value="1"/>
</dbReference>
<dbReference type="SUPFAM" id="SSF141091">
    <property type="entry name" value="L21p-like"/>
    <property type="match status" value="1"/>
</dbReference>
<dbReference type="PROSITE" id="PS01169">
    <property type="entry name" value="RIBOSOMAL_L21"/>
    <property type="match status" value="1"/>
</dbReference>
<feature type="chain" id="PRO_0000270675" description="Large ribosomal subunit protein bL21">
    <location>
        <begin position="1"/>
        <end position="104"/>
    </location>
</feature>
<reference key="1">
    <citation type="journal article" date="2006" name="Proc. Natl. Acad. Sci. U.S.A.">
        <title>The complete genome sequence of a chronic atrophic gastritis Helicobacter pylori strain: evolution during disease progression.</title>
        <authorList>
            <person name="Oh J.D."/>
            <person name="Kling-Baeckhed H."/>
            <person name="Giannakis M."/>
            <person name="Xu J."/>
            <person name="Fulton R.S."/>
            <person name="Fulton L.A."/>
            <person name="Cordum H.S."/>
            <person name="Wang C."/>
            <person name="Elliott G."/>
            <person name="Edwards J."/>
            <person name="Mardis E.R."/>
            <person name="Engstrand L.G."/>
            <person name="Gordon J.I."/>
        </authorList>
    </citation>
    <scope>NUCLEOTIDE SEQUENCE [LARGE SCALE GENOMIC DNA]</scope>
    <source>
        <strain>HPAG1</strain>
    </source>
</reference>
<sequence>MSYAIFKHGGKQYKVVEGDIVLLDKMDKEPKALVELVEVLAVSKEGKLSFGKPFVNGAKIEAEVINEGRGKKVITFKKRRRKDSKTKRGFRRDFTRVRITKIVA</sequence>